<comment type="function">
    <text evidence="1">One of at least two accessory proteins for anaerobic nitric oxide (NO) reductase. Reduces the rubredoxin moiety of NO reductase.</text>
</comment>
<comment type="catalytic activity">
    <reaction evidence="1">
        <text>2 reduced [nitric oxide reductase rubredoxin domain] + NAD(+) + H(+) = 2 oxidized [nitric oxide reductase rubredoxin domain] + NADH</text>
        <dbReference type="Rhea" id="RHEA:42960"/>
        <dbReference type="Rhea" id="RHEA-COMP:10304"/>
        <dbReference type="Rhea" id="RHEA-COMP:10305"/>
        <dbReference type="ChEBI" id="CHEBI:15378"/>
        <dbReference type="ChEBI" id="CHEBI:29033"/>
        <dbReference type="ChEBI" id="CHEBI:29034"/>
        <dbReference type="ChEBI" id="CHEBI:57540"/>
        <dbReference type="ChEBI" id="CHEBI:57945"/>
    </reaction>
</comment>
<comment type="cofactor">
    <cofactor evidence="1">
        <name>FAD</name>
        <dbReference type="ChEBI" id="CHEBI:57692"/>
    </cofactor>
</comment>
<comment type="pathway">
    <text evidence="1">Nitrogen metabolism; nitric oxide reduction.</text>
</comment>
<comment type="subcellular location">
    <subcellularLocation>
        <location evidence="1">Cytoplasm</location>
    </subcellularLocation>
</comment>
<comment type="similarity">
    <text evidence="1">Belongs to the FAD-dependent oxidoreductase family.</text>
</comment>
<evidence type="ECO:0000255" key="1">
    <source>
        <dbReference type="HAMAP-Rule" id="MF_01313"/>
    </source>
</evidence>
<gene>
    <name evidence="1" type="primary">norW</name>
    <name evidence="1" type="synonym">flrR</name>
    <name type="ordered locus">ECH74115_3961</name>
</gene>
<feature type="chain" id="PRO_1000141168" description="Nitric oxide reductase FlRd-NAD(+) reductase">
    <location>
        <begin position="1"/>
        <end position="377"/>
    </location>
</feature>
<proteinExistence type="inferred from homology"/>
<sequence length="377" mass="41303">MSNGIVIIGSGFAARQLVKNIRKQDASIPLTLIAADSMDEYNKPDLSHVISQGQRADDLTRQTAGEFAEQFNLLLFPQTWVTDIDAEARVVKSQNNQWQYDKLVLATGASAFVPPVPGRELMLTLNSQQEYRACETQLRDARRVLIVGGGLIGSELAMDFCRAGKMVTLIDNAASILASLMPPEVSSRLQHRLTEMGVHLLLKSQLQGLEKTDSGILATLDHQRSIEVDAVIAATGLRPETALARRAGLTINRGVCVDSYLQTSNADIYALGDCAEINGQVLPFLQPIQLSAMVLAKNLLGNNTPLKLPAMLVKIKTPELPLHLAGETQRQDLRWQINTERQGMVARGVDDADQLRAFVVSEDRMKEAFGLLKTLPV</sequence>
<reference key="1">
    <citation type="journal article" date="2011" name="Proc. Natl. Acad. Sci. U.S.A.">
        <title>Genomic anatomy of Escherichia coli O157:H7 outbreaks.</title>
        <authorList>
            <person name="Eppinger M."/>
            <person name="Mammel M.K."/>
            <person name="Leclerc J.E."/>
            <person name="Ravel J."/>
            <person name="Cebula T.A."/>
        </authorList>
    </citation>
    <scope>NUCLEOTIDE SEQUENCE [LARGE SCALE GENOMIC DNA]</scope>
    <source>
        <strain>EC4115 / EHEC</strain>
    </source>
</reference>
<organism>
    <name type="scientific">Escherichia coli O157:H7 (strain EC4115 / EHEC)</name>
    <dbReference type="NCBI Taxonomy" id="444450"/>
    <lineage>
        <taxon>Bacteria</taxon>
        <taxon>Pseudomonadati</taxon>
        <taxon>Pseudomonadota</taxon>
        <taxon>Gammaproteobacteria</taxon>
        <taxon>Enterobacterales</taxon>
        <taxon>Enterobacteriaceae</taxon>
        <taxon>Escherichia</taxon>
    </lineage>
</organism>
<keyword id="KW-0963">Cytoplasm</keyword>
<keyword id="KW-0274">FAD</keyword>
<keyword id="KW-0285">Flavoprotein</keyword>
<keyword id="KW-0520">NAD</keyword>
<keyword id="KW-0560">Oxidoreductase</keyword>
<name>NORW_ECO5E</name>
<dbReference type="EC" id="1.18.1.-" evidence="1"/>
<dbReference type="EMBL" id="CP001164">
    <property type="protein sequence ID" value="ACI37818.1"/>
    <property type="molecule type" value="Genomic_DNA"/>
</dbReference>
<dbReference type="RefSeq" id="WP_000064701.1">
    <property type="nucleotide sequence ID" value="NC_011353.1"/>
</dbReference>
<dbReference type="SMR" id="B5Z372"/>
<dbReference type="KEGG" id="ecf:ECH74115_3961"/>
<dbReference type="HOGENOM" id="CLU_003291_4_4_6"/>
<dbReference type="UniPathway" id="UPA00638"/>
<dbReference type="GO" id="GO:0005737">
    <property type="term" value="C:cytoplasm"/>
    <property type="evidence" value="ECO:0007669"/>
    <property type="project" value="UniProtKB-SubCell"/>
</dbReference>
<dbReference type="GO" id="GO:0016731">
    <property type="term" value="F:oxidoreductase activity, acting on iron-sulfur proteins as donors, NAD or NADP as acceptor"/>
    <property type="evidence" value="ECO:0007669"/>
    <property type="project" value="UniProtKB-UniRule"/>
</dbReference>
<dbReference type="FunFam" id="3.30.390.120:FF:000001">
    <property type="entry name" value="Nitric oxide reductase FlRd-NAD(+) reductase"/>
    <property type="match status" value="1"/>
</dbReference>
<dbReference type="FunFam" id="3.50.50.60:FF:000075">
    <property type="entry name" value="Nitric oxide reductase FlRd-NAD(+) reductase"/>
    <property type="match status" value="1"/>
</dbReference>
<dbReference type="Gene3D" id="3.30.390.120">
    <property type="match status" value="1"/>
</dbReference>
<dbReference type="Gene3D" id="3.50.50.60">
    <property type="entry name" value="FAD/NAD(P)-binding domain"/>
    <property type="match status" value="2"/>
</dbReference>
<dbReference type="HAMAP" id="MF_01313">
    <property type="entry name" value="NorW"/>
    <property type="match status" value="1"/>
</dbReference>
<dbReference type="InterPro" id="IPR050260">
    <property type="entry name" value="FAD-bd_OxRdtase"/>
</dbReference>
<dbReference type="InterPro" id="IPR036188">
    <property type="entry name" value="FAD/NAD-bd_sf"/>
</dbReference>
<dbReference type="InterPro" id="IPR023753">
    <property type="entry name" value="FAD/NAD-binding_dom"/>
</dbReference>
<dbReference type="InterPro" id="IPR023961">
    <property type="entry name" value="NO_rdtase_NorW"/>
</dbReference>
<dbReference type="InterPro" id="IPR041364">
    <property type="entry name" value="Rbx-bd"/>
</dbReference>
<dbReference type="NCBIfam" id="NF003437">
    <property type="entry name" value="PRK04965.1"/>
    <property type="match status" value="1"/>
</dbReference>
<dbReference type="PANTHER" id="PTHR43429:SF3">
    <property type="entry name" value="NITRITE REDUCTASE [NAD(P)H]"/>
    <property type="match status" value="1"/>
</dbReference>
<dbReference type="PANTHER" id="PTHR43429">
    <property type="entry name" value="PYRIDINE NUCLEOTIDE-DISULFIDE OXIDOREDUCTASE DOMAIN-CONTAINING"/>
    <property type="match status" value="1"/>
</dbReference>
<dbReference type="Pfam" id="PF07992">
    <property type="entry name" value="Pyr_redox_2"/>
    <property type="match status" value="1"/>
</dbReference>
<dbReference type="Pfam" id="PF18113">
    <property type="entry name" value="Rbx_binding"/>
    <property type="match status" value="1"/>
</dbReference>
<dbReference type="PRINTS" id="PR00368">
    <property type="entry name" value="FADPNR"/>
</dbReference>
<dbReference type="PRINTS" id="PR00411">
    <property type="entry name" value="PNDRDTASEI"/>
</dbReference>
<dbReference type="SUPFAM" id="SSF51905">
    <property type="entry name" value="FAD/NAD(P)-binding domain"/>
    <property type="match status" value="1"/>
</dbReference>
<accession>B5Z372</accession>
<protein>
    <recommendedName>
        <fullName evidence="1">Nitric oxide reductase FlRd-NAD(+) reductase</fullName>
        <ecNumber evidence="1">1.18.1.-</ecNumber>
    </recommendedName>
    <alternativeName>
        <fullName evidence="1">Flavorubredoxin reductase</fullName>
        <shortName evidence="1">FlRd-reductase</shortName>
        <shortName evidence="1">FlavoRb reductase</shortName>
    </alternativeName>
</protein>